<evidence type="ECO:0000250" key="1"/>
<evidence type="ECO:0000255" key="2">
    <source>
        <dbReference type="PROSITE-ProRule" id="PRU00091"/>
    </source>
</evidence>
<evidence type="ECO:0000255" key="3">
    <source>
        <dbReference type="PROSITE-ProRule" id="PRU00213"/>
    </source>
</evidence>
<evidence type="ECO:0000255" key="4">
    <source>
        <dbReference type="PROSITE-ProRule" id="PRU00218"/>
    </source>
</evidence>
<evidence type="ECO:0000256" key="5">
    <source>
        <dbReference type="SAM" id="MobiDB-lite"/>
    </source>
</evidence>
<evidence type="ECO:0000305" key="6"/>
<organism>
    <name type="scientific">Aspergillus fumigatus (strain ATCC MYA-4609 / CBS 101355 / FGSC A1100 / Af293)</name>
    <name type="common">Neosartorya fumigata</name>
    <dbReference type="NCBI Taxonomy" id="330879"/>
    <lineage>
        <taxon>Eukaryota</taxon>
        <taxon>Fungi</taxon>
        <taxon>Dikarya</taxon>
        <taxon>Ascomycota</taxon>
        <taxon>Pezizomycotina</taxon>
        <taxon>Eurotiomycetes</taxon>
        <taxon>Eurotiomycetidae</taxon>
        <taxon>Eurotiales</taxon>
        <taxon>Aspergillaceae</taxon>
        <taxon>Aspergillus</taxon>
        <taxon>Aspergillus subgen. Fumigati</taxon>
    </lineage>
</organism>
<name>VPS27_ASPFU</name>
<sequence>MAGWFSSTSPLDEQVERATSSSLEDMALNLEISDLIRSKSVQPKEAMRSLKRRLENRNPNVQIATLKLTDTCVKNGGSHFLAEIASREFMDNLVSLLTTEGAPLNTDVKEKMLELIQDWAMAAQGRMDLNYLGETYRKLQNEGFRFPPKNEISGSMLESSAPPEWIDSDVCMRCRTPFSFMNRKHHCRNCGNVFDAQCSSKTLPLPHLGILQPVRVDDGCYVKLTSKSSLPSNLSDRSAFKNHSITKANAMEPRGARAEGGFDDDLRRALQLSLEEAQSKGSSGYVPSTRINDEPAKTTTQTNHEEEEDADLKAAIEASLRDMEEHKKKHAAALKSNAAATDSSTRDSAAATPLPKNPYELSPVEVENIHLFAALVDRLQHQPPGTILREPQIQELYESIGALRPKLARSYGETMSKHDTLLDLHAKLSTVVRYYDRMLEERLSSAYSQHSLGYATAPGGSPYPNIYPTMPSHIPEGKTGAENFYYGNPVADRAPPVGNTYGYPHSSRDIREPTAAPSGPISSGVYNQPGQAVPQNPPWNGNAPSVASPQPSAPSTPFPNNSSGYPGPSASTQYYASAPHPEQDSNAYSGPRPGETDVSHQSSPNMRRDSYYQSAGAPVTARASAPEQSPPTDQGQSPAYMQYGDSHSAQSTGQPTHQHQPTAPPPQSYYFQHQPPQSAPLPTHSQTPGAPYGTYPGGDVSPIGAPAPAVHYQPAAQTKPAVEESLIEL</sequence>
<accession>Q4WHN8</accession>
<proteinExistence type="inferred from homology"/>
<keyword id="KW-0967">Endosome</keyword>
<keyword id="KW-0472">Membrane</keyword>
<keyword id="KW-0479">Metal-binding</keyword>
<keyword id="KW-1185">Reference proteome</keyword>
<keyword id="KW-0677">Repeat</keyword>
<keyword id="KW-0862">Zinc</keyword>
<keyword id="KW-0863">Zinc-finger</keyword>
<gene>
    <name type="primary">vps27</name>
    <name type="ORF">AFUA_2G04740</name>
</gene>
<protein>
    <recommendedName>
        <fullName>Vacuolar protein sorting-associated protein 27</fullName>
    </recommendedName>
</protein>
<reference key="1">
    <citation type="journal article" date="2005" name="Nature">
        <title>Genomic sequence of the pathogenic and allergenic filamentous fungus Aspergillus fumigatus.</title>
        <authorList>
            <person name="Nierman W.C."/>
            <person name="Pain A."/>
            <person name="Anderson M.J."/>
            <person name="Wortman J.R."/>
            <person name="Kim H.S."/>
            <person name="Arroyo J."/>
            <person name="Berriman M."/>
            <person name="Abe K."/>
            <person name="Archer D.B."/>
            <person name="Bermejo C."/>
            <person name="Bennett J.W."/>
            <person name="Bowyer P."/>
            <person name="Chen D."/>
            <person name="Collins M."/>
            <person name="Coulsen R."/>
            <person name="Davies R."/>
            <person name="Dyer P.S."/>
            <person name="Farman M.L."/>
            <person name="Fedorova N."/>
            <person name="Fedorova N.D."/>
            <person name="Feldblyum T.V."/>
            <person name="Fischer R."/>
            <person name="Fosker N."/>
            <person name="Fraser A."/>
            <person name="Garcia J.L."/>
            <person name="Garcia M.J."/>
            <person name="Goble A."/>
            <person name="Goldman G.H."/>
            <person name="Gomi K."/>
            <person name="Griffith-Jones S."/>
            <person name="Gwilliam R."/>
            <person name="Haas B.J."/>
            <person name="Haas H."/>
            <person name="Harris D.E."/>
            <person name="Horiuchi H."/>
            <person name="Huang J."/>
            <person name="Humphray S."/>
            <person name="Jimenez J."/>
            <person name="Keller N."/>
            <person name="Khouri H."/>
            <person name="Kitamoto K."/>
            <person name="Kobayashi T."/>
            <person name="Konzack S."/>
            <person name="Kulkarni R."/>
            <person name="Kumagai T."/>
            <person name="Lafton A."/>
            <person name="Latge J.-P."/>
            <person name="Li W."/>
            <person name="Lord A."/>
            <person name="Lu C."/>
            <person name="Majoros W.H."/>
            <person name="May G.S."/>
            <person name="Miller B.L."/>
            <person name="Mohamoud Y."/>
            <person name="Molina M."/>
            <person name="Monod M."/>
            <person name="Mouyna I."/>
            <person name="Mulligan S."/>
            <person name="Murphy L.D."/>
            <person name="O'Neil S."/>
            <person name="Paulsen I."/>
            <person name="Penalva M.A."/>
            <person name="Pertea M."/>
            <person name="Price C."/>
            <person name="Pritchard B.L."/>
            <person name="Quail M.A."/>
            <person name="Rabbinowitsch E."/>
            <person name="Rawlins N."/>
            <person name="Rajandream M.A."/>
            <person name="Reichard U."/>
            <person name="Renauld H."/>
            <person name="Robson G.D."/>
            <person name="Rodriguez de Cordoba S."/>
            <person name="Rodriguez-Pena J.M."/>
            <person name="Ronning C.M."/>
            <person name="Rutter S."/>
            <person name="Salzberg S.L."/>
            <person name="Sanchez M."/>
            <person name="Sanchez-Ferrero J.C."/>
            <person name="Saunders D."/>
            <person name="Seeger K."/>
            <person name="Squares R."/>
            <person name="Squares S."/>
            <person name="Takeuchi M."/>
            <person name="Tekaia F."/>
            <person name="Turner G."/>
            <person name="Vazquez de Aldana C.R."/>
            <person name="Weidman J."/>
            <person name="White O."/>
            <person name="Woodward J.R."/>
            <person name="Yu J.-H."/>
            <person name="Fraser C.M."/>
            <person name="Galagan J.E."/>
            <person name="Asai K."/>
            <person name="Machida M."/>
            <person name="Hall N."/>
            <person name="Barrell B.G."/>
            <person name="Denning D.W."/>
        </authorList>
    </citation>
    <scope>NUCLEOTIDE SEQUENCE [LARGE SCALE GENOMIC DNA]</scope>
    <source>
        <strain>ATCC MYA-4609 / CBS 101355 / FGSC A1100 / Af293</strain>
    </source>
</reference>
<dbReference type="EMBL" id="AAHF01000008">
    <property type="protein sequence ID" value="EAL87567.1"/>
    <property type="molecule type" value="Genomic_DNA"/>
</dbReference>
<dbReference type="RefSeq" id="XP_749605.1">
    <property type="nucleotide sequence ID" value="XM_744512.1"/>
</dbReference>
<dbReference type="SMR" id="Q4WHN8"/>
<dbReference type="FunCoup" id="Q4WHN8">
    <property type="interactions" value="107"/>
</dbReference>
<dbReference type="STRING" id="330879.Q4WHN8"/>
<dbReference type="EnsemblFungi" id="EAL87567">
    <property type="protein sequence ID" value="EAL87567"/>
    <property type="gene ID" value="AFUA_2G04740"/>
</dbReference>
<dbReference type="GeneID" id="3506664"/>
<dbReference type="KEGG" id="afm:AFUA_2G04740"/>
<dbReference type="VEuPathDB" id="FungiDB:Afu2g04740"/>
<dbReference type="eggNOG" id="KOG1818">
    <property type="taxonomic scope" value="Eukaryota"/>
</dbReference>
<dbReference type="HOGENOM" id="CLU_011862_1_0_1"/>
<dbReference type="InParanoid" id="Q4WHN8"/>
<dbReference type="OMA" id="DQQCSAK"/>
<dbReference type="OrthoDB" id="957735at2759"/>
<dbReference type="Proteomes" id="UP000002530">
    <property type="component" value="Chromosome 2"/>
</dbReference>
<dbReference type="GO" id="GO:0010008">
    <property type="term" value="C:endosome membrane"/>
    <property type="evidence" value="ECO:0007669"/>
    <property type="project" value="UniProtKB-SubCell"/>
</dbReference>
<dbReference type="GO" id="GO:0033565">
    <property type="term" value="C:ESCRT-0 complex"/>
    <property type="evidence" value="ECO:0000318"/>
    <property type="project" value="GO_Central"/>
</dbReference>
<dbReference type="GO" id="GO:0032266">
    <property type="term" value="F:phosphatidylinositol-3-phosphate binding"/>
    <property type="evidence" value="ECO:0000318"/>
    <property type="project" value="GO_Central"/>
</dbReference>
<dbReference type="GO" id="GO:0043130">
    <property type="term" value="F:ubiquitin binding"/>
    <property type="evidence" value="ECO:0000318"/>
    <property type="project" value="GO_Central"/>
</dbReference>
<dbReference type="GO" id="GO:0008270">
    <property type="term" value="F:zinc ion binding"/>
    <property type="evidence" value="ECO:0007669"/>
    <property type="project" value="UniProtKB-KW"/>
</dbReference>
<dbReference type="GO" id="GO:0006623">
    <property type="term" value="P:protein targeting to vacuole"/>
    <property type="evidence" value="ECO:0000318"/>
    <property type="project" value="GO_Central"/>
</dbReference>
<dbReference type="GO" id="GO:0043328">
    <property type="term" value="P:protein transport to vacuole involved in ubiquitin-dependent protein catabolic process via the multivesicular body sorting pathway"/>
    <property type="evidence" value="ECO:0000318"/>
    <property type="project" value="GO_Central"/>
</dbReference>
<dbReference type="CDD" id="cd15735">
    <property type="entry name" value="FYVE_spVPS27p_like"/>
    <property type="match status" value="1"/>
</dbReference>
<dbReference type="CDD" id="cd21385">
    <property type="entry name" value="GAT_Vps27"/>
    <property type="match status" value="1"/>
</dbReference>
<dbReference type="CDD" id="cd16979">
    <property type="entry name" value="VHS_Vps27"/>
    <property type="match status" value="1"/>
</dbReference>
<dbReference type="FunFam" id="1.20.5.1940:FF:000001">
    <property type="entry name" value="Vacuolar protein sorting-associated protein 27"/>
    <property type="match status" value="1"/>
</dbReference>
<dbReference type="FunFam" id="1.25.40.90:FF:000031">
    <property type="entry name" value="Vacuolar protein sorting-associated protein 27"/>
    <property type="match status" value="1"/>
</dbReference>
<dbReference type="FunFam" id="3.30.40.10:FF:000161">
    <property type="entry name" value="Vacuolar protein sorting-associated protein 27"/>
    <property type="match status" value="1"/>
</dbReference>
<dbReference type="Gene3D" id="1.20.5.1940">
    <property type="match status" value="1"/>
</dbReference>
<dbReference type="Gene3D" id="1.25.40.90">
    <property type="match status" value="1"/>
</dbReference>
<dbReference type="Gene3D" id="6.10.140.100">
    <property type="match status" value="1"/>
</dbReference>
<dbReference type="Gene3D" id="3.30.40.10">
    <property type="entry name" value="Zinc/RING finger domain, C3HC4 (zinc finger)"/>
    <property type="match status" value="1"/>
</dbReference>
<dbReference type="InterPro" id="IPR008942">
    <property type="entry name" value="ENTH_VHS"/>
</dbReference>
<dbReference type="InterPro" id="IPR017073">
    <property type="entry name" value="HGS/VPS27"/>
</dbReference>
<dbReference type="InterPro" id="IPR003903">
    <property type="entry name" value="UIM_dom"/>
</dbReference>
<dbReference type="InterPro" id="IPR002014">
    <property type="entry name" value="VHS_dom"/>
</dbReference>
<dbReference type="InterPro" id="IPR049425">
    <property type="entry name" value="Vps27_GAT-like"/>
</dbReference>
<dbReference type="InterPro" id="IPR000306">
    <property type="entry name" value="Znf_FYVE"/>
</dbReference>
<dbReference type="InterPro" id="IPR017455">
    <property type="entry name" value="Znf_FYVE-rel"/>
</dbReference>
<dbReference type="InterPro" id="IPR011011">
    <property type="entry name" value="Znf_FYVE_PHD"/>
</dbReference>
<dbReference type="InterPro" id="IPR013083">
    <property type="entry name" value="Znf_RING/FYVE/PHD"/>
</dbReference>
<dbReference type="PANTHER" id="PTHR47794">
    <property type="entry name" value="VACUOLAR PROTEIN SORTING-ASSOCIATED PROTEIN 27"/>
    <property type="match status" value="1"/>
</dbReference>
<dbReference type="PANTHER" id="PTHR47794:SF1">
    <property type="entry name" value="VACUOLAR PROTEIN SORTING-ASSOCIATED PROTEIN 27"/>
    <property type="match status" value="1"/>
</dbReference>
<dbReference type="Pfam" id="PF01363">
    <property type="entry name" value="FYVE"/>
    <property type="match status" value="1"/>
</dbReference>
<dbReference type="Pfam" id="PF02809">
    <property type="entry name" value="UIM"/>
    <property type="match status" value="2"/>
</dbReference>
<dbReference type="Pfam" id="PF00790">
    <property type="entry name" value="VHS"/>
    <property type="match status" value="1"/>
</dbReference>
<dbReference type="Pfam" id="PF21356">
    <property type="entry name" value="Vps27_GAT-like"/>
    <property type="match status" value="1"/>
</dbReference>
<dbReference type="PIRSF" id="PIRSF036956">
    <property type="entry name" value="Hrs_Vps27"/>
    <property type="match status" value="1"/>
</dbReference>
<dbReference type="SMART" id="SM00064">
    <property type="entry name" value="FYVE"/>
    <property type="match status" value="1"/>
</dbReference>
<dbReference type="SMART" id="SM00726">
    <property type="entry name" value="UIM"/>
    <property type="match status" value="2"/>
</dbReference>
<dbReference type="SMART" id="SM00288">
    <property type="entry name" value="VHS"/>
    <property type="match status" value="1"/>
</dbReference>
<dbReference type="SUPFAM" id="SSF48464">
    <property type="entry name" value="ENTH/VHS domain"/>
    <property type="match status" value="1"/>
</dbReference>
<dbReference type="SUPFAM" id="SSF57903">
    <property type="entry name" value="FYVE/PHD zinc finger"/>
    <property type="match status" value="1"/>
</dbReference>
<dbReference type="PROSITE" id="PS50330">
    <property type="entry name" value="UIM"/>
    <property type="match status" value="2"/>
</dbReference>
<dbReference type="PROSITE" id="PS50179">
    <property type="entry name" value="VHS"/>
    <property type="match status" value="1"/>
</dbReference>
<dbReference type="PROSITE" id="PS50178">
    <property type="entry name" value="ZF_FYVE"/>
    <property type="match status" value="1"/>
</dbReference>
<feature type="chain" id="PRO_0000292508" description="Vacuolar protein sorting-associated protein 27">
    <location>
        <begin position="1"/>
        <end position="729"/>
    </location>
</feature>
<feature type="domain" description="VHS" evidence="4">
    <location>
        <begin position="16"/>
        <end position="147"/>
    </location>
</feature>
<feature type="domain" description="UIM 1" evidence="3">
    <location>
        <begin position="261"/>
        <end position="280"/>
    </location>
</feature>
<feature type="domain" description="UIM 2" evidence="3">
    <location>
        <begin position="307"/>
        <end position="326"/>
    </location>
</feature>
<feature type="zinc finger region" description="FYVE-type; degenerate" evidence="2">
    <location>
        <begin position="165"/>
        <end position="225"/>
    </location>
</feature>
<feature type="region of interest" description="Disordered" evidence="5">
    <location>
        <begin position="276"/>
        <end position="310"/>
    </location>
</feature>
<feature type="region of interest" description="Disordered" evidence="5">
    <location>
        <begin position="325"/>
        <end position="356"/>
    </location>
</feature>
<feature type="region of interest" description="Disordered" evidence="5">
    <location>
        <begin position="496"/>
        <end position="729"/>
    </location>
</feature>
<feature type="compositionally biased region" description="Polar residues" evidence="5">
    <location>
        <begin position="279"/>
        <end position="290"/>
    </location>
</feature>
<feature type="compositionally biased region" description="Low complexity" evidence="5">
    <location>
        <begin position="333"/>
        <end position="352"/>
    </location>
</feature>
<feature type="compositionally biased region" description="Polar residues" evidence="5">
    <location>
        <begin position="520"/>
        <end position="534"/>
    </location>
</feature>
<feature type="compositionally biased region" description="Polar residues" evidence="5">
    <location>
        <begin position="560"/>
        <end position="575"/>
    </location>
</feature>
<feature type="compositionally biased region" description="Polar residues" evidence="5">
    <location>
        <begin position="626"/>
        <end position="649"/>
    </location>
</feature>
<feature type="compositionally biased region" description="Low complexity" evidence="5">
    <location>
        <begin position="650"/>
        <end position="661"/>
    </location>
</feature>
<feature type="compositionally biased region" description="Low complexity" evidence="5">
    <location>
        <begin position="687"/>
        <end position="698"/>
    </location>
</feature>
<comment type="function">
    <text evidence="1">Component of the ESCRT-0 complex which is the sorting receptor for ubiquitinated cargo proteins at the multivesicular body (MVB) and recruits ESCRT-I to the MVB outer membrane.</text>
</comment>
<comment type="subunit">
    <text>Component of the ESCRT-0 complex composed of HSE1 and VPS27.</text>
</comment>
<comment type="subcellular location">
    <subcellularLocation>
        <location evidence="1">Endosome membrane</location>
        <topology evidence="1">Peripheral membrane protein</topology>
        <orientation evidence="1">Cytoplasmic side</orientation>
    </subcellularLocation>
</comment>
<comment type="domain">
    <text>The FYVE domain is involved in the binding to phosphatidylinositol 3-phosphate (PtdIns(3)P) which is required for the association to endosomal membranes.</text>
</comment>
<comment type="domain">
    <text evidence="1">Both IUM domains are necessary for efficient binding to ubiquitin.</text>
</comment>
<comment type="similarity">
    <text evidence="6">Belongs to the VPS27 family.</text>
</comment>